<keyword id="KW-1185">Reference proteome</keyword>
<keyword id="KW-0687">Ribonucleoprotein</keyword>
<keyword id="KW-0689">Ribosomal protein</keyword>
<keyword id="KW-0694">RNA-binding</keyword>
<keyword id="KW-0699">rRNA-binding</keyword>
<keyword id="KW-0820">tRNA-binding</keyword>
<protein>
    <recommendedName>
        <fullName evidence="1">Large ribosomal subunit protein uL16</fullName>
    </recommendedName>
    <alternativeName>
        <fullName evidence="2">50S ribosomal protein L16</fullName>
    </alternativeName>
</protein>
<dbReference type="EMBL" id="CP000250">
    <property type="protein sequence ID" value="ABD07007.1"/>
    <property type="molecule type" value="Genomic_DNA"/>
</dbReference>
<dbReference type="RefSeq" id="WP_011441192.1">
    <property type="nucleotide sequence ID" value="NC_007778.1"/>
</dbReference>
<dbReference type="SMR" id="Q2IXQ3"/>
<dbReference type="STRING" id="316058.RPB_2302"/>
<dbReference type="KEGG" id="rpb:RPB_2302"/>
<dbReference type="eggNOG" id="COG0197">
    <property type="taxonomic scope" value="Bacteria"/>
</dbReference>
<dbReference type="HOGENOM" id="CLU_078858_2_1_5"/>
<dbReference type="OrthoDB" id="9802589at2"/>
<dbReference type="Proteomes" id="UP000008809">
    <property type="component" value="Chromosome"/>
</dbReference>
<dbReference type="GO" id="GO:0022625">
    <property type="term" value="C:cytosolic large ribosomal subunit"/>
    <property type="evidence" value="ECO:0007669"/>
    <property type="project" value="TreeGrafter"/>
</dbReference>
<dbReference type="GO" id="GO:0019843">
    <property type="term" value="F:rRNA binding"/>
    <property type="evidence" value="ECO:0007669"/>
    <property type="project" value="UniProtKB-UniRule"/>
</dbReference>
<dbReference type="GO" id="GO:0003735">
    <property type="term" value="F:structural constituent of ribosome"/>
    <property type="evidence" value="ECO:0007669"/>
    <property type="project" value="InterPro"/>
</dbReference>
<dbReference type="GO" id="GO:0000049">
    <property type="term" value="F:tRNA binding"/>
    <property type="evidence" value="ECO:0007669"/>
    <property type="project" value="UniProtKB-KW"/>
</dbReference>
<dbReference type="GO" id="GO:0006412">
    <property type="term" value="P:translation"/>
    <property type="evidence" value="ECO:0007669"/>
    <property type="project" value="UniProtKB-UniRule"/>
</dbReference>
<dbReference type="CDD" id="cd01433">
    <property type="entry name" value="Ribosomal_L16_L10e"/>
    <property type="match status" value="1"/>
</dbReference>
<dbReference type="FunFam" id="3.90.1170.10:FF:000001">
    <property type="entry name" value="50S ribosomal protein L16"/>
    <property type="match status" value="1"/>
</dbReference>
<dbReference type="Gene3D" id="3.90.1170.10">
    <property type="entry name" value="Ribosomal protein L10e/L16"/>
    <property type="match status" value="1"/>
</dbReference>
<dbReference type="HAMAP" id="MF_01342">
    <property type="entry name" value="Ribosomal_uL16"/>
    <property type="match status" value="1"/>
</dbReference>
<dbReference type="InterPro" id="IPR047873">
    <property type="entry name" value="Ribosomal_uL16"/>
</dbReference>
<dbReference type="InterPro" id="IPR000114">
    <property type="entry name" value="Ribosomal_uL16_bact-type"/>
</dbReference>
<dbReference type="InterPro" id="IPR020798">
    <property type="entry name" value="Ribosomal_uL16_CS"/>
</dbReference>
<dbReference type="InterPro" id="IPR016180">
    <property type="entry name" value="Ribosomal_uL16_dom"/>
</dbReference>
<dbReference type="InterPro" id="IPR036920">
    <property type="entry name" value="Ribosomal_uL16_sf"/>
</dbReference>
<dbReference type="NCBIfam" id="TIGR01164">
    <property type="entry name" value="rplP_bact"/>
    <property type="match status" value="1"/>
</dbReference>
<dbReference type="PANTHER" id="PTHR12220">
    <property type="entry name" value="50S/60S RIBOSOMAL PROTEIN L16"/>
    <property type="match status" value="1"/>
</dbReference>
<dbReference type="PANTHER" id="PTHR12220:SF13">
    <property type="entry name" value="LARGE RIBOSOMAL SUBUNIT PROTEIN UL16M"/>
    <property type="match status" value="1"/>
</dbReference>
<dbReference type="Pfam" id="PF00252">
    <property type="entry name" value="Ribosomal_L16"/>
    <property type="match status" value="1"/>
</dbReference>
<dbReference type="PRINTS" id="PR00060">
    <property type="entry name" value="RIBOSOMALL16"/>
</dbReference>
<dbReference type="SUPFAM" id="SSF54686">
    <property type="entry name" value="Ribosomal protein L16p/L10e"/>
    <property type="match status" value="1"/>
</dbReference>
<dbReference type="PROSITE" id="PS00586">
    <property type="entry name" value="RIBOSOMAL_L16_1"/>
    <property type="match status" value="1"/>
</dbReference>
<dbReference type="PROSITE" id="PS00701">
    <property type="entry name" value="RIBOSOMAL_L16_2"/>
    <property type="match status" value="1"/>
</dbReference>
<reference key="1">
    <citation type="submission" date="2006-01" db="EMBL/GenBank/DDBJ databases">
        <title>Complete sequence of Rhodopseudomonas palustris HaA2.</title>
        <authorList>
            <consortium name="US DOE Joint Genome Institute"/>
            <person name="Copeland A."/>
            <person name="Lucas S."/>
            <person name="Lapidus A."/>
            <person name="Barry K."/>
            <person name="Detter J.C."/>
            <person name="Glavina T."/>
            <person name="Hammon N."/>
            <person name="Israni S."/>
            <person name="Pitluck S."/>
            <person name="Chain P."/>
            <person name="Malfatti S."/>
            <person name="Shin M."/>
            <person name="Vergez L."/>
            <person name="Schmutz J."/>
            <person name="Larimer F."/>
            <person name="Land M."/>
            <person name="Hauser L."/>
            <person name="Pelletier D.A."/>
            <person name="Kyrpides N."/>
            <person name="Anderson I."/>
            <person name="Oda Y."/>
            <person name="Harwood C.S."/>
            <person name="Richardson P."/>
        </authorList>
    </citation>
    <scope>NUCLEOTIDE SEQUENCE [LARGE SCALE GENOMIC DNA]</scope>
    <source>
        <strain>HaA2</strain>
    </source>
</reference>
<feature type="chain" id="PRO_0000251664" description="Large ribosomal subunit protein uL16">
    <location>
        <begin position="1"/>
        <end position="137"/>
    </location>
</feature>
<sequence>MMQPKKTKFRKAHKGRIHGVASSGATLAFGQFGLKAMEPERVTARQIEAARRALTRHMKRAGRVWIRIFPDVPVSKKPAEVRMGSGKGAPELWVARVKPGRVMFEIDGVNQQTAKEALTLAAAKLPIKTRFVARIAE</sequence>
<name>RL16_RHOP2</name>
<comment type="function">
    <text evidence="1">Binds 23S rRNA and is also seen to make contacts with the A and possibly P site tRNAs.</text>
</comment>
<comment type="subunit">
    <text evidence="1">Part of the 50S ribosomal subunit.</text>
</comment>
<comment type="similarity">
    <text evidence="1">Belongs to the universal ribosomal protein uL16 family.</text>
</comment>
<evidence type="ECO:0000255" key="1">
    <source>
        <dbReference type="HAMAP-Rule" id="MF_01342"/>
    </source>
</evidence>
<evidence type="ECO:0000305" key="2"/>
<organism>
    <name type="scientific">Rhodopseudomonas palustris (strain HaA2)</name>
    <dbReference type="NCBI Taxonomy" id="316058"/>
    <lineage>
        <taxon>Bacteria</taxon>
        <taxon>Pseudomonadati</taxon>
        <taxon>Pseudomonadota</taxon>
        <taxon>Alphaproteobacteria</taxon>
        <taxon>Hyphomicrobiales</taxon>
        <taxon>Nitrobacteraceae</taxon>
        <taxon>Rhodopseudomonas</taxon>
    </lineage>
</organism>
<proteinExistence type="inferred from homology"/>
<gene>
    <name evidence="1" type="primary">rplP</name>
    <name type="ordered locus">RPB_2302</name>
</gene>
<accession>Q2IXQ3</accession>